<gene>
    <name evidence="1" type="primary">MDE1</name>
    <name type="ordered locus">KLTH0B01386g</name>
</gene>
<comment type="function">
    <text evidence="1">Catalyzes the dehydration of methylthioribulose-1-phosphate (MTRu-1-P) into 2,3-diketo-5-methylthiopentyl-1-phosphate (DK-MTP-1-P).</text>
</comment>
<comment type="catalytic activity">
    <reaction evidence="1">
        <text>5-(methylsulfanyl)-D-ribulose 1-phosphate = 5-methylsulfanyl-2,3-dioxopentyl phosphate + H2O</text>
        <dbReference type="Rhea" id="RHEA:15549"/>
        <dbReference type="ChEBI" id="CHEBI:15377"/>
        <dbReference type="ChEBI" id="CHEBI:58548"/>
        <dbReference type="ChEBI" id="CHEBI:58828"/>
        <dbReference type="EC" id="4.2.1.109"/>
    </reaction>
</comment>
<comment type="cofactor">
    <cofactor evidence="1">
        <name>Zn(2+)</name>
        <dbReference type="ChEBI" id="CHEBI:29105"/>
    </cofactor>
    <text evidence="1">Binds 1 zinc ion per subunit.</text>
</comment>
<comment type="pathway">
    <text evidence="1">Amino-acid biosynthesis; L-methionine biosynthesis via salvage pathway; L-methionine from S-methyl-5-thio-alpha-D-ribose 1-phosphate: step 2/6.</text>
</comment>
<comment type="subcellular location">
    <subcellularLocation>
        <location evidence="1">Cytoplasm</location>
    </subcellularLocation>
</comment>
<comment type="similarity">
    <text evidence="1">Belongs to the aldolase class II family. MtnB subfamily.</text>
</comment>
<dbReference type="EC" id="4.2.1.109" evidence="1"/>
<dbReference type="EMBL" id="CU928166">
    <property type="protein sequence ID" value="CAR21413.1"/>
    <property type="molecule type" value="Genomic_DNA"/>
</dbReference>
<dbReference type="RefSeq" id="XP_002551851.1">
    <property type="nucleotide sequence ID" value="XM_002551805.1"/>
</dbReference>
<dbReference type="SMR" id="C5DCA2"/>
<dbReference type="FunCoup" id="C5DCA2">
    <property type="interactions" value="261"/>
</dbReference>
<dbReference type="STRING" id="559295.C5DCA2"/>
<dbReference type="GeneID" id="8290678"/>
<dbReference type="KEGG" id="lth:KLTH0B01386g"/>
<dbReference type="eggNOG" id="KOG2631">
    <property type="taxonomic scope" value="Eukaryota"/>
</dbReference>
<dbReference type="HOGENOM" id="CLU_006033_4_0_1"/>
<dbReference type="InParanoid" id="C5DCA2"/>
<dbReference type="OMA" id="WFPGTSG"/>
<dbReference type="OrthoDB" id="191080at2759"/>
<dbReference type="UniPathway" id="UPA00904">
    <property type="reaction ID" value="UER00875"/>
</dbReference>
<dbReference type="Proteomes" id="UP000002036">
    <property type="component" value="Chromosome B"/>
</dbReference>
<dbReference type="GO" id="GO:0005737">
    <property type="term" value="C:cytoplasm"/>
    <property type="evidence" value="ECO:0007669"/>
    <property type="project" value="UniProtKB-SubCell"/>
</dbReference>
<dbReference type="GO" id="GO:0046570">
    <property type="term" value="F:methylthioribulose 1-phosphate dehydratase activity"/>
    <property type="evidence" value="ECO:0007669"/>
    <property type="project" value="UniProtKB-UniRule"/>
</dbReference>
<dbReference type="GO" id="GO:0008270">
    <property type="term" value="F:zinc ion binding"/>
    <property type="evidence" value="ECO:0007669"/>
    <property type="project" value="UniProtKB-UniRule"/>
</dbReference>
<dbReference type="GO" id="GO:0019509">
    <property type="term" value="P:L-methionine salvage from methylthioadenosine"/>
    <property type="evidence" value="ECO:0007669"/>
    <property type="project" value="UniProtKB-UniRule"/>
</dbReference>
<dbReference type="FunFam" id="3.40.225.10:FF:000003">
    <property type="entry name" value="Methylthioribulose-1-phosphate dehydratase"/>
    <property type="match status" value="1"/>
</dbReference>
<dbReference type="Gene3D" id="3.40.225.10">
    <property type="entry name" value="Class II aldolase/adducin N-terminal domain"/>
    <property type="match status" value="1"/>
</dbReference>
<dbReference type="HAMAP" id="MF_03116">
    <property type="entry name" value="Salvage_MtnB_euk"/>
    <property type="match status" value="1"/>
</dbReference>
<dbReference type="InterPro" id="IPR001303">
    <property type="entry name" value="Aldolase_II/adducin_N"/>
</dbReference>
<dbReference type="InterPro" id="IPR036409">
    <property type="entry name" value="Aldolase_II/adducin_N_sf"/>
</dbReference>
<dbReference type="InterPro" id="IPR017714">
    <property type="entry name" value="MethylthioRu-1-P_deHdtase_MtnB"/>
</dbReference>
<dbReference type="InterPro" id="IPR027514">
    <property type="entry name" value="Salvage_MtnB_euk"/>
</dbReference>
<dbReference type="NCBIfam" id="TIGR03328">
    <property type="entry name" value="salvage_mtnB"/>
    <property type="match status" value="1"/>
</dbReference>
<dbReference type="PANTHER" id="PTHR10640">
    <property type="entry name" value="METHYLTHIORIBULOSE-1-PHOSPHATE DEHYDRATASE"/>
    <property type="match status" value="1"/>
</dbReference>
<dbReference type="PANTHER" id="PTHR10640:SF7">
    <property type="entry name" value="METHYLTHIORIBULOSE-1-PHOSPHATE DEHYDRATASE"/>
    <property type="match status" value="1"/>
</dbReference>
<dbReference type="Pfam" id="PF00596">
    <property type="entry name" value="Aldolase_II"/>
    <property type="match status" value="1"/>
</dbReference>
<dbReference type="SMART" id="SM01007">
    <property type="entry name" value="Aldolase_II"/>
    <property type="match status" value="1"/>
</dbReference>
<dbReference type="SUPFAM" id="SSF53639">
    <property type="entry name" value="AraD/HMP-PK domain-like"/>
    <property type="match status" value="1"/>
</dbReference>
<protein>
    <recommendedName>
        <fullName evidence="1">Methylthioribulose-1-phosphate dehydratase</fullName>
        <shortName evidence="1">MTRu-1-P dehydratase</shortName>
        <ecNumber evidence="1">4.2.1.109</ecNumber>
    </recommendedName>
</protein>
<reference key="1">
    <citation type="journal article" date="2009" name="Genome Res.">
        <title>Comparative genomics of protoploid Saccharomycetaceae.</title>
        <authorList>
            <consortium name="The Genolevures Consortium"/>
            <person name="Souciet J.-L."/>
            <person name="Dujon B."/>
            <person name="Gaillardin C."/>
            <person name="Johnston M."/>
            <person name="Baret P.V."/>
            <person name="Cliften P."/>
            <person name="Sherman D.J."/>
            <person name="Weissenbach J."/>
            <person name="Westhof E."/>
            <person name="Wincker P."/>
            <person name="Jubin C."/>
            <person name="Poulain J."/>
            <person name="Barbe V."/>
            <person name="Segurens B."/>
            <person name="Artiguenave F."/>
            <person name="Anthouard V."/>
            <person name="Vacherie B."/>
            <person name="Val M.-E."/>
            <person name="Fulton R.S."/>
            <person name="Minx P."/>
            <person name="Wilson R."/>
            <person name="Durrens P."/>
            <person name="Jean G."/>
            <person name="Marck C."/>
            <person name="Martin T."/>
            <person name="Nikolski M."/>
            <person name="Rolland T."/>
            <person name="Seret M.-L."/>
            <person name="Casaregola S."/>
            <person name="Despons L."/>
            <person name="Fairhead C."/>
            <person name="Fischer G."/>
            <person name="Lafontaine I."/>
            <person name="Leh V."/>
            <person name="Lemaire M."/>
            <person name="de Montigny J."/>
            <person name="Neuveglise C."/>
            <person name="Thierry A."/>
            <person name="Blanc-Lenfle I."/>
            <person name="Bleykasten C."/>
            <person name="Diffels J."/>
            <person name="Fritsch E."/>
            <person name="Frangeul L."/>
            <person name="Goeffon A."/>
            <person name="Jauniaux N."/>
            <person name="Kachouri-Lafond R."/>
            <person name="Payen C."/>
            <person name="Potier S."/>
            <person name="Pribylova L."/>
            <person name="Ozanne C."/>
            <person name="Richard G.-F."/>
            <person name="Sacerdot C."/>
            <person name="Straub M.-L."/>
            <person name="Talla E."/>
        </authorList>
    </citation>
    <scope>NUCLEOTIDE SEQUENCE [LARGE SCALE GENOMIC DNA]</scope>
    <source>
        <strain>ATCC 56472 / CBS 6340 / NRRL Y-8284</strain>
    </source>
</reference>
<feature type="chain" id="PRO_0000393827" description="Methylthioribulose-1-phosphate dehydratase">
    <location>
        <begin position="1"/>
        <end position="257"/>
    </location>
</feature>
<feature type="active site" description="Proton donor/acceptor" evidence="1">
    <location>
        <position position="148"/>
    </location>
</feature>
<feature type="binding site" evidence="1">
    <location>
        <position position="107"/>
    </location>
    <ligand>
        <name>substrate</name>
    </ligand>
</feature>
<feature type="binding site" evidence="1">
    <location>
        <position position="125"/>
    </location>
    <ligand>
        <name>Zn(2+)</name>
        <dbReference type="ChEBI" id="CHEBI:29105"/>
    </ligand>
</feature>
<feature type="binding site" evidence="1">
    <location>
        <position position="127"/>
    </location>
    <ligand>
        <name>Zn(2+)</name>
        <dbReference type="ChEBI" id="CHEBI:29105"/>
    </ligand>
</feature>
<feature type="binding site" evidence="1">
    <location>
        <position position="210"/>
    </location>
    <ligand>
        <name>Zn(2+)</name>
        <dbReference type="ChEBI" id="CHEBI:29105"/>
    </ligand>
</feature>
<proteinExistence type="inferred from homology"/>
<name>MTNB_LACTC</name>
<evidence type="ECO:0000255" key="1">
    <source>
        <dbReference type="HAMAP-Rule" id="MF_03116"/>
    </source>
</evidence>
<keyword id="KW-0028">Amino-acid biosynthesis</keyword>
<keyword id="KW-0963">Cytoplasm</keyword>
<keyword id="KW-0456">Lyase</keyword>
<keyword id="KW-0479">Metal-binding</keyword>
<keyword id="KW-0486">Methionine biosynthesis</keyword>
<keyword id="KW-1185">Reference proteome</keyword>
<keyword id="KW-0862">Zinc</keyword>
<organism>
    <name type="scientific">Lachancea thermotolerans (strain ATCC 56472 / CBS 6340 / NRRL Y-8284)</name>
    <name type="common">Yeast</name>
    <name type="synonym">Kluyveromyces thermotolerans</name>
    <dbReference type="NCBI Taxonomy" id="559295"/>
    <lineage>
        <taxon>Eukaryota</taxon>
        <taxon>Fungi</taxon>
        <taxon>Dikarya</taxon>
        <taxon>Ascomycota</taxon>
        <taxon>Saccharomycotina</taxon>
        <taxon>Saccharomycetes</taxon>
        <taxon>Saccharomycetales</taxon>
        <taxon>Saccharomycetaceae</taxon>
        <taxon>Lachancea</taxon>
    </lineage>
</organism>
<sequence>MASCFCNKVDVTEGTHGTSSSDDALVSSQDPRHPANLICTLCKMFYYNNWVTGTGGGISIKHSKTGHIYIAPSGVQKEQLKPADMFVMDPASGSYLRTPQLYKPSACTPLFMSCYKQRDAGAVIHTHSQHAVMCSLIFDKELRIANIEQIKAIPSGKKDAKTGKDINLSFFDTLVIPIIDNTAHEEDLTEGLQEALQKYPNTTAVIVRRHGIYVWGPSVDKAKVYNEAIDYLMEVAWKMHQLGIPPDCGIGEEKKYL</sequence>
<accession>C5DCA2</accession>